<protein>
    <recommendedName>
        <fullName>Putative metal transport protein MJ1569</fullName>
    </recommendedName>
</protein>
<sequence>MHIPDGYLGPITCAFFYLIMIPIWYKSIKELKKLDPRKLPLLGVLTAFSFLVMMFNLPVPDGTTAHMVGGTLIAILMDNPWVATIAISIVLIIQAIFFGDGGITCIGANCFNMGVVLPFVGYYVYKFLRDKVGEVIASGIGAYVGIVAAAIVAGFEFGLQPFIEPGYCPYPFTVSVPAMAFAHLITAGPAAAVVTAIVVWYVKKVRPDLFTSKEQQVSGVNA</sequence>
<evidence type="ECO:0000255" key="1"/>
<evidence type="ECO:0000305" key="2"/>
<comment type="function">
    <text>May be involved in metal transport.</text>
</comment>
<comment type="subcellular location">
    <subcellularLocation>
        <location evidence="2">Cell membrane</location>
        <topology evidence="2">Multi-pass membrane protein</topology>
    </subcellularLocation>
</comment>
<comment type="similarity">
    <text evidence="2">Belongs to the CbiM family.</text>
</comment>
<reference key="1">
    <citation type="journal article" date="1996" name="Science">
        <title>Complete genome sequence of the methanogenic archaeon, Methanococcus jannaschii.</title>
        <authorList>
            <person name="Bult C.J."/>
            <person name="White O."/>
            <person name="Olsen G.J."/>
            <person name="Zhou L."/>
            <person name="Fleischmann R.D."/>
            <person name="Sutton G.G."/>
            <person name="Blake J.A."/>
            <person name="FitzGerald L.M."/>
            <person name="Clayton R.A."/>
            <person name="Gocayne J.D."/>
            <person name="Kerlavage A.R."/>
            <person name="Dougherty B.A."/>
            <person name="Tomb J.-F."/>
            <person name="Adams M.D."/>
            <person name="Reich C.I."/>
            <person name="Overbeek R."/>
            <person name="Kirkness E.F."/>
            <person name="Weinstock K.G."/>
            <person name="Merrick J.M."/>
            <person name="Glodek A."/>
            <person name="Scott J.L."/>
            <person name="Geoghagen N.S.M."/>
            <person name="Weidman J.F."/>
            <person name="Fuhrmann J.L."/>
            <person name="Nguyen D."/>
            <person name="Utterback T.R."/>
            <person name="Kelley J.M."/>
            <person name="Peterson J.D."/>
            <person name="Sadow P.W."/>
            <person name="Hanna M.C."/>
            <person name="Cotton M.D."/>
            <person name="Roberts K.M."/>
            <person name="Hurst M.A."/>
            <person name="Kaine B.P."/>
            <person name="Borodovsky M."/>
            <person name="Klenk H.-P."/>
            <person name="Fraser C.M."/>
            <person name="Smith H.O."/>
            <person name="Woese C.R."/>
            <person name="Venter J.C."/>
        </authorList>
    </citation>
    <scope>NUCLEOTIDE SEQUENCE [LARGE SCALE GENOMIC DNA]</scope>
    <source>
        <strain>ATCC 43067 / DSM 2661 / JAL-1 / JCM 10045 / NBRC 100440</strain>
    </source>
</reference>
<name>Y1569_METJA</name>
<gene>
    <name type="ordered locus">MJ1569</name>
</gene>
<keyword id="KW-1003">Cell membrane</keyword>
<keyword id="KW-0472">Membrane</keyword>
<keyword id="KW-1185">Reference proteome</keyword>
<keyword id="KW-0812">Transmembrane</keyword>
<keyword id="KW-1133">Transmembrane helix</keyword>
<keyword id="KW-0813">Transport</keyword>
<accession>Q58964</accession>
<organism>
    <name type="scientific">Methanocaldococcus jannaschii (strain ATCC 43067 / DSM 2661 / JAL-1 / JCM 10045 / NBRC 100440)</name>
    <name type="common">Methanococcus jannaschii</name>
    <dbReference type="NCBI Taxonomy" id="243232"/>
    <lineage>
        <taxon>Archaea</taxon>
        <taxon>Methanobacteriati</taxon>
        <taxon>Methanobacteriota</taxon>
        <taxon>Methanomada group</taxon>
        <taxon>Methanococci</taxon>
        <taxon>Methanococcales</taxon>
        <taxon>Methanocaldococcaceae</taxon>
        <taxon>Methanocaldococcus</taxon>
    </lineage>
</organism>
<proteinExistence type="inferred from homology"/>
<feature type="chain" id="PRO_0000107416" description="Putative metal transport protein MJ1569">
    <location>
        <begin position="1"/>
        <end position="222"/>
    </location>
</feature>
<feature type="transmembrane region" description="Helical" evidence="1">
    <location>
        <begin position="3"/>
        <end position="23"/>
    </location>
</feature>
<feature type="transmembrane region" description="Helical" evidence="1">
    <location>
        <begin position="39"/>
        <end position="59"/>
    </location>
</feature>
<feature type="transmembrane region" description="Helical" evidence="1">
    <location>
        <begin position="81"/>
        <end position="101"/>
    </location>
</feature>
<feature type="transmembrane region" description="Helical" evidence="1">
    <location>
        <begin position="102"/>
        <end position="122"/>
    </location>
</feature>
<feature type="transmembrane region" description="Helical" evidence="1">
    <location>
        <begin position="135"/>
        <end position="155"/>
    </location>
</feature>
<feature type="transmembrane region" description="Helical" evidence="1">
    <location>
        <begin position="180"/>
        <end position="200"/>
    </location>
</feature>
<dbReference type="EMBL" id="L77117">
    <property type="protein sequence ID" value="AAB99587.1"/>
    <property type="molecule type" value="Genomic_DNA"/>
</dbReference>
<dbReference type="PIR" id="H64495">
    <property type="entry name" value="H64495"/>
</dbReference>
<dbReference type="RefSeq" id="WP_010871093.1">
    <property type="nucleotide sequence ID" value="NC_000909.1"/>
</dbReference>
<dbReference type="SMR" id="Q58964"/>
<dbReference type="STRING" id="243232.MJ_1569"/>
<dbReference type="PaxDb" id="243232-MJ_1569"/>
<dbReference type="EnsemblBacteria" id="AAB99587">
    <property type="protein sequence ID" value="AAB99587"/>
    <property type="gene ID" value="MJ_1569"/>
</dbReference>
<dbReference type="GeneID" id="1452477"/>
<dbReference type="KEGG" id="mja:MJ_1569"/>
<dbReference type="eggNOG" id="arCOG02248">
    <property type="taxonomic scope" value="Archaea"/>
</dbReference>
<dbReference type="HOGENOM" id="CLU_052508_2_1_2"/>
<dbReference type="InParanoid" id="Q58964"/>
<dbReference type="OrthoDB" id="71235at2157"/>
<dbReference type="PhylomeDB" id="Q58964"/>
<dbReference type="Proteomes" id="UP000000805">
    <property type="component" value="Chromosome"/>
</dbReference>
<dbReference type="GO" id="GO:0005886">
    <property type="term" value="C:plasma membrane"/>
    <property type="evidence" value="ECO:0007669"/>
    <property type="project" value="UniProtKB-SubCell"/>
</dbReference>
<dbReference type="GO" id="GO:0000041">
    <property type="term" value="P:transition metal ion transport"/>
    <property type="evidence" value="ECO:0007669"/>
    <property type="project" value="InterPro"/>
</dbReference>
<dbReference type="Gene3D" id="1.10.1760.20">
    <property type="match status" value="1"/>
</dbReference>
<dbReference type="InterPro" id="IPR002751">
    <property type="entry name" value="CbiM/NikMN"/>
</dbReference>
<dbReference type="NCBIfam" id="NF008873">
    <property type="entry name" value="PRK11909.1"/>
    <property type="match status" value="1"/>
</dbReference>
<dbReference type="PANTHER" id="PTHR34229">
    <property type="entry name" value="METAL TRANSPORT PROTEIN HI_1621-RELATED"/>
    <property type="match status" value="1"/>
</dbReference>
<dbReference type="PANTHER" id="PTHR34229:SF1">
    <property type="entry name" value="METAL TRANSPORT PROTEIN HI_1621-RELATED"/>
    <property type="match status" value="1"/>
</dbReference>
<dbReference type="Pfam" id="PF01891">
    <property type="entry name" value="CbiM"/>
    <property type="match status" value="1"/>
</dbReference>